<reference key="1">
    <citation type="submission" date="2008-04" db="EMBL/GenBank/DDBJ databases">
        <title>Complete sequence of Clostridium botulinum strain Eklund.</title>
        <authorList>
            <person name="Brinkac L.M."/>
            <person name="Brown J.L."/>
            <person name="Bruce D."/>
            <person name="Detter C."/>
            <person name="Munk C."/>
            <person name="Smith L.A."/>
            <person name="Smith T.J."/>
            <person name="Sutton G."/>
            <person name="Brettin T.S."/>
        </authorList>
    </citation>
    <scope>NUCLEOTIDE SEQUENCE [LARGE SCALE GENOMIC DNA]</scope>
    <source>
        <strain>Eklund 17B / Type B</strain>
    </source>
</reference>
<accession>B2TMJ1</accession>
<protein>
    <recommendedName>
        <fullName evidence="1">Potassium-transporting ATPase potassium-binding subunit</fullName>
    </recommendedName>
    <alternativeName>
        <fullName evidence="1">ATP phosphohydrolase [potassium-transporting] A chain</fullName>
    </alternativeName>
    <alternativeName>
        <fullName evidence="1">Potassium-binding and translocating subunit A</fullName>
    </alternativeName>
    <alternativeName>
        <fullName evidence="1">Potassium-translocating ATPase A chain</fullName>
    </alternativeName>
</protein>
<proteinExistence type="inferred from homology"/>
<sequence length="579" mass="62050">MMNLVLQYGLYILILVVLAIPLGNYIGKIMNGEKVFLSKILTPCENFIYKILHIDKDEDMSWKKYSFSVLAFSIISLIVLFLLHIFQGFLPLNPEKVSGTSWDLAFNNAISFVTNTNWQGYSGESSLSYFTQMMGLTVQNFVSAAVGISVLFALIRGFIRVKQKGIGNFWIDITRTVLYILIPLSIVVSLALVSQGVVQNFKQYETVSLLEPITLEDGTLVTEEVVPLGPAASQIAIKQLGTNGGGFMGTNSAHPIENPTILSNLFEMISLLLIPVALCFTFGRNIKDRRQGIAIFVAMGIMLVVAMAIVGVNEQIGTPQMALNGQVDLSTINQAGGNMEGKEARFGIATSSTWATFTTAASNGSVNSMHDSYTPIGGMIPMLLMQLGEVVFGGVGCGLYGMIGFAILAVFMAGLMVGRTPEYLGKKIEPFEMKMAVLVCLATPIAILIGSGIASILPETVNSLNNSGAHGFSEVLYAYTSAGGNNGSAFAGFAANTPFINISIGLSMIFARFVPMMGTLAIAGSMVKKKKVAESVGTLPTHNAMFIGLLIFVVLLIGALSFFPALALGPIAEFFQMLG</sequence>
<feature type="chain" id="PRO_1000114676" description="Potassium-transporting ATPase potassium-binding subunit">
    <location>
        <begin position="1"/>
        <end position="579"/>
    </location>
</feature>
<feature type="transmembrane region" description="Helical" evidence="1">
    <location>
        <begin position="2"/>
        <end position="22"/>
    </location>
</feature>
<feature type="transmembrane region" description="Helical" evidence="1">
    <location>
        <begin position="66"/>
        <end position="86"/>
    </location>
</feature>
<feature type="transmembrane region" description="Helical" evidence="1">
    <location>
        <begin position="135"/>
        <end position="155"/>
    </location>
</feature>
<feature type="transmembrane region" description="Helical" evidence="1">
    <location>
        <begin position="177"/>
        <end position="197"/>
    </location>
</feature>
<feature type="transmembrane region" description="Helical" evidence="1">
    <location>
        <begin position="260"/>
        <end position="280"/>
    </location>
</feature>
<feature type="transmembrane region" description="Helical" evidence="1">
    <location>
        <begin position="292"/>
        <end position="312"/>
    </location>
</feature>
<feature type="transmembrane region" description="Helical" evidence="1">
    <location>
        <begin position="391"/>
        <end position="411"/>
    </location>
</feature>
<feature type="transmembrane region" description="Helical" evidence="1">
    <location>
        <begin position="437"/>
        <end position="457"/>
    </location>
</feature>
<feature type="transmembrane region" description="Helical" evidence="1">
    <location>
        <begin position="490"/>
        <end position="510"/>
    </location>
</feature>
<feature type="transmembrane region" description="Helical" evidence="1">
    <location>
        <begin position="546"/>
        <end position="566"/>
    </location>
</feature>
<evidence type="ECO:0000255" key="1">
    <source>
        <dbReference type="HAMAP-Rule" id="MF_00275"/>
    </source>
</evidence>
<dbReference type="EMBL" id="CP001056">
    <property type="protein sequence ID" value="ACD23630.1"/>
    <property type="molecule type" value="Genomic_DNA"/>
</dbReference>
<dbReference type="SMR" id="B2TMJ1"/>
<dbReference type="KEGG" id="cbk:CLL_A0978"/>
<dbReference type="PATRIC" id="fig|935198.13.peg.928"/>
<dbReference type="HOGENOM" id="CLU_018614_3_0_9"/>
<dbReference type="Proteomes" id="UP000001195">
    <property type="component" value="Chromosome"/>
</dbReference>
<dbReference type="GO" id="GO:0005886">
    <property type="term" value="C:plasma membrane"/>
    <property type="evidence" value="ECO:0007669"/>
    <property type="project" value="UniProtKB-SubCell"/>
</dbReference>
<dbReference type="GO" id="GO:0008556">
    <property type="term" value="F:P-type potassium transmembrane transporter activity"/>
    <property type="evidence" value="ECO:0007669"/>
    <property type="project" value="InterPro"/>
</dbReference>
<dbReference type="GO" id="GO:0030955">
    <property type="term" value="F:potassium ion binding"/>
    <property type="evidence" value="ECO:0007669"/>
    <property type="project" value="UniProtKB-UniRule"/>
</dbReference>
<dbReference type="HAMAP" id="MF_00275">
    <property type="entry name" value="KdpA"/>
    <property type="match status" value="1"/>
</dbReference>
<dbReference type="InterPro" id="IPR004623">
    <property type="entry name" value="KdpA"/>
</dbReference>
<dbReference type="NCBIfam" id="TIGR00680">
    <property type="entry name" value="kdpA"/>
    <property type="match status" value="1"/>
</dbReference>
<dbReference type="PANTHER" id="PTHR30607">
    <property type="entry name" value="POTASSIUM-TRANSPORTING ATPASE A CHAIN"/>
    <property type="match status" value="1"/>
</dbReference>
<dbReference type="PANTHER" id="PTHR30607:SF2">
    <property type="entry name" value="POTASSIUM-TRANSPORTING ATPASE POTASSIUM-BINDING SUBUNIT"/>
    <property type="match status" value="1"/>
</dbReference>
<dbReference type="Pfam" id="PF03814">
    <property type="entry name" value="KdpA"/>
    <property type="match status" value="1"/>
</dbReference>
<dbReference type="PIRSF" id="PIRSF001294">
    <property type="entry name" value="K_ATPaseA"/>
    <property type="match status" value="1"/>
</dbReference>
<comment type="function">
    <text evidence="1">Part of the high-affinity ATP-driven potassium transport (or Kdp) system, which catalyzes the hydrolysis of ATP coupled with the electrogenic transport of potassium into the cytoplasm. This subunit binds the extracellular potassium ions and delivers the ions to the membrane domain of KdpB through an intramembrane tunnel.</text>
</comment>
<comment type="subunit">
    <text evidence="1">The system is composed of three essential subunits: KdpA, KdpB and KdpC.</text>
</comment>
<comment type="subcellular location">
    <subcellularLocation>
        <location evidence="1">Cell membrane</location>
        <topology evidence="1">Multi-pass membrane protein</topology>
    </subcellularLocation>
</comment>
<comment type="similarity">
    <text evidence="1">Belongs to the KdpA family.</text>
</comment>
<keyword id="KW-1003">Cell membrane</keyword>
<keyword id="KW-0406">Ion transport</keyword>
<keyword id="KW-0472">Membrane</keyword>
<keyword id="KW-0630">Potassium</keyword>
<keyword id="KW-0633">Potassium transport</keyword>
<keyword id="KW-0812">Transmembrane</keyword>
<keyword id="KW-1133">Transmembrane helix</keyword>
<keyword id="KW-0813">Transport</keyword>
<gene>
    <name evidence="1" type="primary">kdpA</name>
    <name type="ordered locus">CLL_A0978</name>
</gene>
<name>KDPA_CLOBB</name>
<organism>
    <name type="scientific">Clostridium botulinum (strain Eklund 17B / Type B)</name>
    <dbReference type="NCBI Taxonomy" id="935198"/>
    <lineage>
        <taxon>Bacteria</taxon>
        <taxon>Bacillati</taxon>
        <taxon>Bacillota</taxon>
        <taxon>Clostridia</taxon>
        <taxon>Eubacteriales</taxon>
        <taxon>Clostridiaceae</taxon>
        <taxon>Clostridium</taxon>
    </lineage>
</organism>